<name>GSA_ACISJ</name>
<keyword id="KW-0963">Cytoplasm</keyword>
<keyword id="KW-0413">Isomerase</keyword>
<keyword id="KW-0627">Porphyrin biosynthesis</keyword>
<keyword id="KW-0663">Pyridoxal phosphate</keyword>
<proteinExistence type="inferred from homology"/>
<gene>
    <name evidence="1" type="primary">hemL</name>
    <name type="ordered locus">Ajs_3581</name>
</gene>
<sequence length="434" mass="45915">MTHNTDLNLPLFERAKALIPGGVNSPVRAFRAVGGTPRFITRAQGAYMWDANGQRFIDYIGSWGPMILGHGHPAVLEAVQKAALEGFSFGAPTEREVELAEEIIRHVPSMEMIRLVSSGTEAGMSAIRLARGATRRNKIIKFNGCYHGHADSLLVKAGSGLATFGHATSAGVPQEVVQHTLVLEYNDVAQLEEAFTLHGPDVACVIMEPIAGNMNFVRASVPFMRRARELCTQHGALLVIDEVMTGFRVALGGAQSLYAQAIPGFKPDITVLGKVIGGGMPLAAFGGSRAVMEQLAPLGPVYQAGTLSGNPVATACGLATLREIAKPGFYDALGARTRALIDGLAGAASAAGVPLCGDTQGGMFGFFLLPQLPQNYPEVLNTDGMRFNTLFHGLLDGGVYIAPALYEAGFVSAAHTEQDIADTVAVARDVFQKL</sequence>
<protein>
    <recommendedName>
        <fullName evidence="1">Glutamate-1-semialdehyde 2,1-aminomutase</fullName>
        <shortName evidence="1">GSA</shortName>
        <ecNumber evidence="1">5.4.3.8</ecNumber>
    </recommendedName>
    <alternativeName>
        <fullName evidence="1">Glutamate-1-semialdehyde aminotransferase</fullName>
        <shortName evidence="1">GSA-AT</shortName>
    </alternativeName>
</protein>
<accession>A1WBR8</accession>
<organism>
    <name type="scientific">Acidovorax sp. (strain JS42)</name>
    <dbReference type="NCBI Taxonomy" id="232721"/>
    <lineage>
        <taxon>Bacteria</taxon>
        <taxon>Pseudomonadati</taxon>
        <taxon>Pseudomonadota</taxon>
        <taxon>Betaproteobacteria</taxon>
        <taxon>Burkholderiales</taxon>
        <taxon>Comamonadaceae</taxon>
        <taxon>Acidovorax</taxon>
    </lineage>
</organism>
<reference key="1">
    <citation type="submission" date="2006-12" db="EMBL/GenBank/DDBJ databases">
        <title>Complete sequence of chromosome 1 of Acidovorax sp. JS42.</title>
        <authorList>
            <person name="Copeland A."/>
            <person name="Lucas S."/>
            <person name="Lapidus A."/>
            <person name="Barry K."/>
            <person name="Detter J.C."/>
            <person name="Glavina del Rio T."/>
            <person name="Dalin E."/>
            <person name="Tice H."/>
            <person name="Pitluck S."/>
            <person name="Chertkov O."/>
            <person name="Brettin T."/>
            <person name="Bruce D."/>
            <person name="Han C."/>
            <person name="Tapia R."/>
            <person name="Gilna P."/>
            <person name="Schmutz J."/>
            <person name="Larimer F."/>
            <person name="Land M."/>
            <person name="Hauser L."/>
            <person name="Kyrpides N."/>
            <person name="Kim E."/>
            <person name="Stahl D."/>
            <person name="Richardson P."/>
        </authorList>
    </citation>
    <scope>NUCLEOTIDE SEQUENCE [LARGE SCALE GENOMIC DNA]</scope>
    <source>
        <strain>JS42</strain>
    </source>
</reference>
<feature type="chain" id="PRO_0000300888" description="Glutamate-1-semialdehyde 2,1-aminomutase">
    <location>
        <begin position="1"/>
        <end position="434"/>
    </location>
</feature>
<feature type="modified residue" description="N6-(pyridoxal phosphate)lysine" evidence="1">
    <location>
        <position position="274"/>
    </location>
</feature>
<evidence type="ECO:0000255" key="1">
    <source>
        <dbReference type="HAMAP-Rule" id="MF_00375"/>
    </source>
</evidence>
<dbReference type="EC" id="5.4.3.8" evidence="1"/>
<dbReference type="EMBL" id="CP000539">
    <property type="protein sequence ID" value="ABM43693.1"/>
    <property type="molecule type" value="Genomic_DNA"/>
</dbReference>
<dbReference type="SMR" id="A1WBR8"/>
<dbReference type="STRING" id="232721.Ajs_3581"/>
<dbReference type="KEGG" id="ajs:Ajs_3581"/>
<dbReference type="eggNOG" id="COG0001">
    <property type="taxonomic scope" value="Bacteria"/>
</dbReference>
<dbReference type="HOGENOM" id="CLU_016922_1_5_4"/>
<dbReference type="UniPathway" id="UPA00251">
    <property type="reaction ID" value="UER00317"/>
</dbReference>
<dbReference type="Proteomes" id="UP000000645">
    <property type="component" value="Chromosome"/>
</dbReference>
<dbReference type="GO" id="GO:0005737">
    <property type="term" value="C:cytoplasm"/>
    <property type="evidence" value="ECO:0007669"/>
    <property type="project" value="UniProtKB-SubCell"/>
</dbReference>
<dbReference type="GO" id="GO:0042286">
    <property type="term" value="F:glutamate-1-semialdehyde 2,1-aminomutase activity"/>
    <property type="evidence" value="ECO:0007669"/>
    <property type="project" value="UniProtKB-UniRule"/>
</dbReference>
<dbReference type="GO" id="GO:0030170">
    <property type="term" value="F:pyridoxal phosphate binding"/>
    <property type="evidence" value="ECO:0007669"/>
    <property type="project" value="InterPro"/>
</dbReference>
<dbReference type="GO" id="GO:0008483">
    <property type="term" value="F:transaminase activity"/>
    <property type="evidence" value="ECO:0007669"/>
    <property type="project" value="InterPro"/>
</dbReference>
<dbReference type="GO" id="GO:0006782">
    <property type="term" value="P:protoporphyrinogen IX biosynthetic process"/>
    <property type="evidence" value="ECO:0007669"/>
    <property type="project" value="UniProtKB-UniRule"/>
</dbReference>
<dbReference type="CDD" id="cd00610">
    <property type="entry name" value="OAT_like"/>
    <property type="match status" value="1"/>
</dbReference>
<dbReference type="FunFam" id="3.40.640.10:FF:000021">
    <property type="entry name" value="Glutamate-1-semialdehyde 2,1-aminomutase"/>
    <property type="match status" value="1"/>
</dbReference>
<dbReference type="Gene3D" id="3.90.1150.10">
    <property type="entry name" value="Aspartate Aminotransferase, domain 1"/>
    <property type="match status" value="1"/>
</dbReference>
<dbReference type="Gene3D" id="3.40.640.10">
    <property type="entry name" value="Type I PLP-dependent aspartate aminotransferase-like (Major domain)"/>
    <property type="match status" value="1"/>
</dbReference>
<dbReference type="HAMAP" id="MF_00375">
    <property type="entry name" value="HemL_aminotrans_3"/>
    <property type="match status" value="1"/>
</dbReference>
<dbReference type="InterPro" id="IPR004639">
    <property type="entry name" value="4pyrrol_synth_GluAld_NH2Trfase"/>
</dbReference>
<dbReference type="InterPro" id="IPR005814">
    <property type="entry name" value="Aminotrans_3"/>
</dbReference>
<dbReference type="InterPro" id="IPR015424">
    <property type="entry name" value="PyrdxlP-dep_Trfase"/>
</dbReference>
<dbReference type="InterPro" id="IPR015421">
    <property type="entry name" value="PyrdxlP-dep_Trfase_major"/>
</dbReference>
<dbReference type="InterPro" id="IPR015422">
    <property type="entry name" value="PyrdxlP-dep_Trfase_small"/>
</dbReference>
<dbReference type="NCBIfam" id="TIGR00713">
    <property type="entry name" value="hemL"/>
    <property type="match status" value="1"/>
</dbReference>
<dbReference type="NCBIfam" id="NF000818">
    <property type="entry name" value="PRK00062.1"/>
    <property type="match status" value="1"/>
</dbReference>
<dbReference type="PANTHER" id="PTHR43713">
    <property type="entry name" value="GLUTAMATE-1-SEMIALDEHYDE 2,1-AMINOMUTASE"/>
    <property type="match status" value="1"/>
</dbReference>
<dbReference type="PANTHER" id="PTHR43713:SF3">
    <property type="entry name" value="GLUTAMATE-1-SEMIALDEHYDE 2,1-AMINOMUTASE 1, CHLOROPLASTIC-RELATED"/>
    <property type="match status" value="1"/>
</dbReference>
<dbReference type="Pfam" id="PF00202">
    <property type="entry name" value="Aminotran_3"/>
    <property type="match status" value="1"/>
</dbReference>
<dbReference type="SUPFAM" id="SSF53383">
    <property type="entry name" value="PLP-dependent transferases"/>
    <property type="match status" value="1"/>
</dbReference>
<comment type="catalytic activity">
    <reaction evidence="1">
        <text>(S)-4-amino-5-oxopentanoate = 5-aminolevulinate</text>
        <dbReference type="Rhea" id="RHEA:14265"/>
        <dbReference type="ChEBI" id="CHEBI:57501"/>
        <dbReference type="ChEBI" id="CHEBI:356416"/>
        <dbReference type="EC" id="5.4.3.8"/>
    </reaction>
</comment>
<comment type="cofactor">
    <cofactor evidence="1">
        <name>pyridoxal 5'-phosphate</name>
        <dbReference type="ChEBI" id="CHEBI:597326"/>
    </cofactor>
</comment>
<comment type="pathway">
    <text evidence="1">Porphyrin-containing compound metabolism; protoporphyrin-IX biosynthesis; 5-aminolevulinate from L-glutamyl-tRNA(Glu): step 2/2.</text>
</comment>
<comment type="subunit">
    <text evidence="1">Homodimer.</text>
</comment>
<comment type="subcellular location">
    <subcellularLocation>
        <location evidence="1">Cytoplasm</location>
    </subcellularLocation>
</comment>
<comment type="similarity">
    <text evidence="1">Belongs to the class-III pyridoxal-phosphate-dependent aminotransferase family. HemL subfamily.</text>
</comment>